<gene>
    <name evidence="1" type="primary">glyS</name>
    <name type="ordered locus">PputW619_0079</name>
</gene>
<organism>
    <name type="scientific">Pseudomonas putida (strain W619)</name>
    <dbReference type="NCBI Taxonomy" id="390235"/>
    <lineage>
        <taxon>Bacteria</taxon>
        <taxon>Pseudomonadati</taxon>
        <taxon>Pseudomonadota</taxon>
        <taxon>Gammaproteobacteria</taxon>
        <taxon>Pseudomonadales</taxon>
        <taxon>Pseudomonadaceae</taxon>
        <taxon>Pseudomonas</taxon>
    </lineage>
</organism>
<accession>B1J425</accession>
<reference key="1">
    <citation type="submission" date="2008-02" db="EMBL/GenBank/DDBJ databases">
        <title>Complete sequence of Pseudomonas putida W619.</title>
        <authorList>
            <person name="Copeland A."/>
            <person name="Lucas S."/>
            <person name="Lapidus A."/>
            <person name="Barry K."/>
            <person name="Detter J.C."/>
            <person name="Glavina del Rio T."/>
            <person name="Dalin E."/>
            <person name="Tice H."/>
            <person name="Pitluck S."/>
            <person name="Chain P."/>
            <person name="Malfatti S."/>
            <person name="Shin M."/>
            <person name="Vergez L."/>
            <person name="Schmutz J."/>
            <person name="Larimer F."/>
            <person name="Land M."/>
            <person name="Hauser L."/>
            <person name="Kyrpides N."/>
            <person name="Kim E."/>
            <person name="Taghavi S."/>
            <person name="Vangronsveld D."/>
            <person name="van der Lelie D."/>
            <person name="Richardson P."/>
        </authorList>
    </citation>
    <scope>NUCLEOTIDE SEQUENCE [LARGE SCALE GENOMIC DNA]</scope>
    <source>
        <strain>W619</strain>
    </source>
</reference>
<protein>
    <recommendedName>
        <fullName evidence="1">Glycine--tRNA ligase beta subunit</fullName>
        <ecNumber evidence="1">6.1.1.14</ecNumber>
    </recommendedName>
    <alternativeName>
        <fullName evidence="1">Glycyl-tRNA synthetase beta subunit</fullName>
        <shortName evidence="1">GlyRS</shortName>
    </alternativeName>
</protein>
<evidence type="ECO:0000255" key="1">
    <source>
        <dbReference type="HAMAP-Rule" id="MF_00255"/>
    </source>
</evidence>
<feature type="chain" id="PRO_1000101317" description="Glycine--tRNA ligase beta subunit">
    <location>
        <begin position="1"/>
        <end position="683"/>
    </location>
</feature>
<keyword id="KW-0030">Aminoacyl-tRNA synthetase</keyword>
<keyword id="KW-0067">ATP-binding</keyword>
<keyword id="KW-0963">Cytoplasm</keyword>
<keyword id="KW-0436">Ligase</keyword>
<keyword id="KW-0547">Nucleotide-binding</keyword>
<keyword id="KW-0648">Protein biosynthesis</keyword>
<comment type="catalytic activity">
    <reaction evidence="1">
        <text>tRNA(Gly) + glycine + ATP = glycyl-tRNA(Gly) + AMP + diphosphate</text>
        <dbReference type="Rhea" id="RHEA:16013"/>
        <dbReference type="Rhea" id="RHEA-COMP:9664"/>
        <dbReference type="Rhea" id="RHEA-COMP:9683"/>
        <dbReference type="ChEBI" id="CHEBI:30616"/>
        <dbReference type="ChEBI" id="CHEBI:33019"/>
        <dbReference type="ChEBI" id="CHEBI:57305"/>
        <dbReference type="ChEBI" id="CHEBI:78442"/>
        <dbReference type="ChEBI" id="CHEBI:78522"/>
        <dbReference type="ChEBI" id="CHEBI:456215"/>
        <dbReference type="EC" id="6.1.1.14"/>
    </reaction>
</comment>
<comment type="subunit">
    <text evidence="1">Tetramer of two alpha and two beta subunits.</text>
</comment>
<comment type="subcellular location">
    <subcellularLocation>
        <location evidence="1">Cytoplasm</location>
    </subcellularLocation>
</comment>
<comment type="similarity">
    <text evidence="1">Belongs to the class-II aminoacyl-tRNA synthetase family.</text>
</comment>
<dbReference type="EC" id="6.1.1.14" evidence="1"/>
<dbReference type="EMBL" id="CP000949">
    <property type="protein sequence ID" value="ACA70585.1"/>
    <property type="molecule type" value="Genomic_DNA"/>
</dbReference>
<dbReference type="SMR" id="B1J425"/>
<dbReference type="STRING" id="390235.PputW619_0079"/>
<dbReference type="KEGG" id="ppw:PputW619_0079"/>
<dbReference type="eggNOG" id="COG0751">
    <property type="taxonomic scope" value="Bacteria"/>
</dbReference>
<dbReference type="HOGENOM" id="CLU_007220_2_2_6"/>
<dbReference type="OrthoDB" id="9775440at2"/>
<dbReference type="GO" id="GO:0005829">
    <property type="term" value="C:cytosol"/>
    <property type="evidence" value="ECO:0007669"/>
    <property type="project" value="TreeGrafter"/>
</dbReference>
<dbReference type="GO" id="GO:0004814">
    <property type="term" value="F:arginine-tRNA ligase activity"/>
    <property type="evidence" value="ECO:0007669"/>
    <property type="project" value="InterPro"/>
</dbReference>
<dbReference type="GO" id="GO:0005524">
    <property type="term" value="F:ATP binding"/>
    <property type="evidence" value="ECO:0007669"/>
    <property type="project" value="UniProtKB-UniRule"/>
</dbReference>
<dbReference type="GO" id="GO:0004820">
    <property type="term" value="F:glycine-tRNA ligase activity"/>
    <property type="evidence" value="ECO:0007669"/>
    <property type="project" value="UniProtKB-UniRule"/>
</dbReference>
<dbReference type="GO" id="GO:0006420">
    <property type="term" value="P:arginyl-tRNA aminoacylation"/>
    <property type="evidence" value="ECO:0007669"/>
    <property type="project" value="InterPro"/>
</dbReference>
<dbReference type="GO" id="GO:0006426">
    <property type="term" value="P:glycyl-tRNA aminoacylation"/>
    <property type="evidence" value="ECO:0007669"/>
    <property type="project" value="UniProtKB-UniRule"/>
</dbReference>
<dbReference type="HAMAP" id="MF_00255">
    <property type="entry name" value="Gly_tRNA_synth_beta"/>
    <property type="match status" value="1"/>
</dbReference>
<dbReference type="InterPro" id="IPR008909">
    <property type="entry name" value="DALR_anticod-bd"/>
</dbReference>
<dbReference type="InterPro" id="IPR015944">
    <property type="entry name" value="Gly-tRNA-synth_bsu"/>
</dbReference>
<dbReference type="InterPro" id="IPR006194">
    <property type="entry name" value="Gly-tRNA-synth_heterodimer"/>
</dbReference>
<dbReference type="NCBIfam" id="TIGR00211">
    <property type="entry name" value="glyS"/>
    <property type="match status" value="1"/>
</dbReference>
<dbReference type="PANTHER" id="PTHR30075:SF2">
    <property type="entry name" value="GLYCINE--TRNA LIGASE, CHLOROPLASTIC_MITOCHONDRIAL 2"/>
    <property type="match status" value="1"/>
</dbReference>
<dbReference type="PANTHER" id="PTHR30075">
    <property type="entry name" value="GLYCYL-TRNA SYNTHETASE"/>
    <property type="match status" value="1"/>
</dbReference>
<dbReference type="Pfam" id="PF05746">
    <property type="entry name" value="DALR_1"/>
    <property type="match status" value="1"/>
</dbReference>
<dbReference type="Pfam" id="PF02092">
    <property type="entry name" value="tRNA_synt_2f"/>
    <property type="match status" value="1"/>
</dbReference>
<dbReference type="PRINTS" id="PR01045">
    <property type="entry name" value="TRNASYNTHGB"/>
</dbReference>
<dbReference type="SUPFAM" id="SSF109604">
    <property type="entry name" value="HD-domain/PDEase-like"/>
    <property type="match status" value="1"/>
</dbReference>
<dbReference type="PROSITE" id="PS50861">
    <property type="entry name" value="AA_TRNA_LIGASE_II_GLYAB"/>
    <property type="match status" value="1"/>
</dbReference>
<proteinExistence type="inferred from homology"/>
<name>SYGB_PSEPW</name>
<sequence>MSAQDFLVELGTEELPPKALATLGDAFLAGIEKGLQAAGLNYTGKQVYAAPRRLAVLIRQLDVQQPDRSINIDGPPLQAAFKDGEPTQAALGFAKKCGVELSEIDQSGAKLRFSQHIPGKATASLLPTIVEDSLNDLPIPKRMRWAASREEFVRPTQWLVMLLGDQVVDCTILSQQAGRESRGHRFHHPQNVVITTPANYVEDLRKAYVLADFAERRELIAKRTTELAMQQEGTAIVPPALLDEVTALVEWPVPLVCSFEERFLEVPQEALITTMQDNQKYFCLLDSEGKLLPRFITVANVESRDPKQIVSGNEKVVRPRLTDAEFFFKQDKKQPLETFNERLKNVVFQAQLGTVYDKAERVSRLAAYIAPLIGGDAQRAGRAGLLSKCDLATEMVGEFPEMQGVAGYYYALNDGEPQDVALALNEQYMPRGAGAELPQTLTGAAVAIADKLDTLVGIFGIGMLPTGSKDPYALRRAALGVLRILIEKQLDLDLTPAVEFAVKQFGAKVKAAGLAEQVLEFIFDRLRARYEDEGIDVATYLSVRALKPGSALDFDQRVQAVQAFRKLPEAEALAAVNKRVSNLLSKAEGAIAEQVEPKYFDNANEFSLYSAIQQADQAVQPMAAARQYSESLARLAALRDPVDAFFEAVMVNAEDAKVRANRYALLSRLRGLFLGVADISLLG</sequence>